<evidence type="ECO:0000255" key="1">
    <source>
        <dbReference type="HAMAP-Rule" id="MF_01390"/>
    </source>
</evidence>
<accession>Q7YKQ3</accession>
<dbReference type="EMBL" id="AF531777">
    <property type="protein sequence ID" value="AAP87837.1"/>
    <property type="molecule type" value="Genomic_DNA"/>
</dbReference>
<dbReference type="GO" id="GO:0009507">
    <property type="term" value="C:chloroplast"/>
    <property type="evidence" value="ECO:0007669"/>
    <property type="project" value="UniProtKB-SubCell"/>
</dbReference>
<dbReference type="GO" id="GO:0003723">
    <property type="term" value="F:RNA binding"/>
    <property type="evidence" value="ECO:0007669"/>
    <property type="project" value="UniProtKB-KW"/>
</dbReference>
<dbReference type="GO" id="GO:0006397">
    <property type="term" value="P:mRNA processing"/>
    <property type="evidence" value="ECO:0007669"/>
    <property type="project" value="UniProtKB-KW"/>
</dbReference>
<dbReference type="GO" id="GO:0008380">
    <property type="term" value="P:RNA splicing"/>
    <property type="evidence" value="ECO:0007669"/>
    <property type="project" value="UniProtKB-UniRule"/>
</dbReference>
<dbReference type="GO" id="GO:0008033">
    <property type="term" value="P:tRNA processing"/>
    <property type="evidence" value="ECO:0007669"/>
    <property type="project" value="UniProtKB-KW"/>
</dbReference>
<dbReference type="HAMAP" id="MF_01390">
    <property type="entry name" value="MatK"/>
    <property type="match status" value="1"/>
</dbReference>
<dbReference type="InterPro" id="IPR024937">
    <property type="entry name" value="Domain_X"/>
</dbReference>
<dbReference type="InterPro" id="IPR002866">
    <property type="entry name" value="Maturase_MatK"/>
</dbReference>
<dbReference type="InterPro" id="IPR024942">
    <property type="entry name" value="Maturase_MatK_N"/>
</dbReference>
<dbReference type="PANTHER" id="PTHR34811">
    <property type="entry name" value="MATURASE K"/>
    <property type="match status" value="1"/>
</dbReference>
<dbReference type="PANTHER" id="PTHR34811:SF1">
    <property type="entry name" value="MATURASE K"/>
    <property type="match status" value="1"/>
</dbReference>
<dbReference type="Pfam" id="PF01348">
    <property type="entry name" value="Intron_maturas2"/>
    <property type="match status" value="1"/>
</dbReference>
<dbReference type="Pfam" id="PF01824">
    <property type="entry name" value="MatK_N"/>
    <property type="match status" value="1"/>
</dbReference>
<protein>
    <recommendedName>
        <fullName evidence="1">Maturase K</fullName>
    </recommendedName>
    <alternativeName>
        <fullName evidence="1">Intron maturase</fullName>
    </alternativeName>
</protein>
<proteinExistence type="inferred from homology"/>
<comment type="function">
    <text evidence="1">Usually encoded in the trnK tRNA gene intron. Probably assists in splicing its own and other chloroplast group II introns.</text>
</comment>
<comment type="subcellular location">
    <subcellularLocation>
        <location>Plastid</location>
        <location>Chloroplast</location>
    </subcellularLocation>
</comment>
<comment type="similarity">
    <text evidence="1">Belongs to the intron maturase 2 family. MatK subfamily.</text>
</comment>
<keyword id="KW-0150">Chloroplast</keyword>
<keyword id="KW-0507">mRNA processing</keyword>
<keyword id="KW-0934">Plastid</keyword>
<keyword id="KW-0694">RNA-binding</keyword>
<keyword id="KW-0819">tRNA processing</keyword>
<feature type="chain" id="PRO_0000143410" description="Maturase K">
    <location>
        <begin position="1"/>
        <end position="510"/>
    </location>
</feature>
<geneLocation type="chloroplast"/>
<sequence>MEEIQRYLQLERYHQHDFLYPLIFQEYIYTFAHDRDYNRSILSENSCYEKKFSLLIVKRLITRMYQQNHFLIFSNDSNQNPFEGRNKNFYFQIISEGFALIAEIPFSRRLRASLKEKKIVKFQNLRSIQAIFSFLEDSFSHLNFVLDILIPHSVHVEILVQTLRYWVKDASSLHLLRFFLNEYCNSNSLITPKEVSSSFSTKRNKRLFLFLYNSHVCEYESILVFLRKQSSHLRSTSSGLLLERIYFYAKIERLVNLFVKVKGFQVNLWLVKEPCMHYVRYQRKSIWASNGASLLIKKWKSYLVAFWQWHFSMWFHPRRISINQLSNHSLEFLGYHSSVRMNPSVVRSQSLENSFLINNALKKFDTLVPIISLIAALAQAKFCNVLGDPISKPVWADLSDSNIIYRFGHICRNLSHYYSGSSKKNSLYRIKYILRLSCARTLARKHKSTVRAFLKKLGSELLEEFLMSEKDVLSLTFPKASSIFGGGYRRQIWYLDIISINDLANHKSKF</sequence>
<reference key="1">
    <citation type="journal article" date="2004" name="Plant Biol.">
        <title>Evolution of carnivory in lentibulariaceae and the Lamiales.</title>
        <authorList>
            <person name="Mueller K.F."/>
            <person name="Borsch T."/>
            <person name="Legendre L."/>
            <person name="Porembski S."/>
            <person name="Theisen I."/>
            <person name="Barthlott W."/>
        </authorList>
    </citation>
    <scope>NUCLEOTIDE SEQUENCE [GENOMIC DNA]</scope>
</reference>
<organism>
    <name type="scientific">Gratiola officinalis</name>
    <name type="common">Hedgehyssop</name>
    <dbReference type="NCBI Taxonomy" id="204382"/>
    <lineage>
        <taxon>Eukaryota</taxon>
        <taxon>Viridiplantae</taxon>
        <taxon>Streptophyta</taxon>
        <taxon>Embryophyta</taxon>
        <taxon>Tracheophyta</taxon>
        <taxon>Spermatophyta</taxon>
        <taxon>Magnoliopsida</taxon>
        <taxon>eudicotyledons</taxon>
        <taxon>Gunneridae</taxon>
        <taxon>Pentapetalae</taxon>
        <taxon>asterids</taxon>
        <taxon>lamiids</taxon>
        <taxon>Lamiales</taxon>
        <taxon>Plantaginaceae</taxon>
        <taxon>Gratioleae</taxon>
        <taxon>Gratiola</taxon>
    </lineage>
</organism>
<name>MATK_GRAOF</name>
<gene>
    <name evidence="1" type="primary">matK</name>
</gene>